<keyword id="KW-0963">Cytoplasm</keyword>
<keyword id="KW-0378">Hydrolase</keyword>
<keyword id="KW-0645">Protease</keyword>
<keyword id="KW-0720">Serine protease</keyword>
<reference key="1">
    <citation type="journal article" date="2006" name="Genome Biol.">
        <title>The genome of Rhizobium leguminosarum has recognizable core and accessory components.</title>
        <authorList>
            <person name="Young J.P.W."/>
            <person name="Crossman L.C."/>
            <person name="Johnston A.W.B."/>
            <person name="Thomson N.R."/>
            <person name="Ghazoui Z.F."/>
            <person name="Hull K.H."/>
            <person name="Wexler M."/>
            <person name="Curson A.R.J."/>
            <person name="Todd J.D."/>
            <person name="Poole P.S."/>
            <person name="Mauchline T.H."/>
            <person name="East A.K."/>
            <person name="Quail M.A."/>
            <person name="Churcher C."/>
            <person name="Arrowsmith C."/>
            <person name="Cherevach I."/>
            <person name="Chillingworth T."/>
            <person name="Clarke K."/>
            <person name="Cronin A."/>
            <person name="Davis P."/>
            <person name="Fraser A."/>
            <person name="Hance Z."/>
            <person name="Hauser H."/>
            <person name="Jagels K."/>
            <person name="Moule S."/>
            <person name="Mungall K."/>
            <person name="Norbertczak H."/>
            <person name="Rabbinowitsch E."/>
            <person name="Sanders M."/>
            <person name="Simmonds M."/>
            <person name="Whitehead S."/>
            <person name="Parkhill J."/>
        </authorList>
    </citation>
    <scope>NUCLEOTIDE SEQUENCE [LARGE SCALE GENOMIC DNA]</scope>
    <source>
        <strain>DSM 114642 / LMG 32736 / 3841</strain>
    </source>
</reference>
<name>CLPP1_RHIJ3</name>
<sequence>MREAMQLVPMVIEQSSRGERSFDIYSRLLRERIIFLNGEVNDTVSALVCAQLLFLEAENSKKPINLYINSPGGVVTSGLAMYDTMRFIRAPVHTLCMGTARSMGSFLLMAGEAGGRAALPNASILIHQPSGGFQGQASDMMIHAEEILKTKQRMTRLYAEHCGRSYEDFERGMDRDRFMTAEEALEWGLIDRILTVREGEIPD</sequence>
<protein>
    <recommendedName>
        <fullName evidence="1">ATP-dependent Clp protease proteolytic subunit 1</fullName>
        <ecNumber evidence="1">3.4.21.92</ecNumber>
    </recommendedName>
    <alternativeName>
        <fullName evidence="1">Endopeptidase Clp 1</fullName>
    </alternativeName>
</protein>
<feature type="chain" id="PRO_0000252835" description="ATP-dependent Clp protease proteolytic subunit 1">
    <location>
        <begin position="1"/>
        <end position="203"/>
    </location>
</feature>
<feature type="active site" description="Nucleophile" evidence="1">
    <location>
        <position position="102"/>
    </location>
</feature>
<feature type="active site" evidence="1">
    <location>
        <position position="127"/>
    </location>
</feature>
<gene>
    <name evidence="1" type="primary">clpP1</name>
    <name type="ordered locus">RL1170</name>
</gene>
<dbReference type="EC" id="3.4.21.92" evidence="1"/>
<dbReference type="EMBL" id="AM236080">
    <property type="protein sequence ID" value="CAK06667.1"/>
    <property type="molecule type" value="Genomic_DNA"/>
</dbReference>
<dbReference type="RefSeq" id="WP_011650896.1">
    <property type="nucleotide sequence ID" value="NC_008380.1"/>
</dbReference>
<dbReference type="SMR" id="Q1MK43"/>
<dbReference type="MEROPS" id="S14.001"/>
<dbReference type="EnsemblBacteria" id="CAK06667">
    <property type="protein sequence ID" value="CAK06667"/>
    <property type="gene ID" value="RL1170"/>
</dbReference>
<dbReference type="KEGG" id="rle:RL1170"/>
<dbReference type="eggNOG" id="COG0740">
    <property type="taxonomic scope" value="Bacteria"/>
</dbReference>
<dbReference type="HOGENOM" id="CLU_058707_3_2_5"/>
<dbReference type="Proteomes" id="UP000006575">
    <property type="component" value="Chromosome"/>
</dbReference>
<dbReference type="GO" id="GO:0005737">
    <property type="term" value="C:cytoplasm"/>
    <property type="evidence" value="ECO:0007669"/>
    <property type="project" value="UniProtKB-SubCell"/>
</dbReference>
<dbReference type="GO" id="GO:0009368">
    <property type="term" value="C:endopeptidase Clp complex"/>
    <property type="evidence" value="ECO:0007669"/>
    <property type="project" value="TreeGrafter"/>
</dbReference>
<dbReference type="GO" id="GO:0004176">
    <property type="term" value="F:ATP-dependent peptidase activity"/>
    <property type="evidence" value="ECO:0007669"/>
    <property type="project" value="InterPro"/>
</dbReference>
<dbReference type="GO" id="GO:0051117">
    <property type="term" value="F:ATPase binding"/>
    <property type="evidence" value="ECO:0007669"/>
    <property type="project" value="TreeGrafter"/>
</dbReference>
<dbReference type="GO" id="GO:0004252">
    <property type="term" value="F:serine-type endopeptidase activity"/>
    <property type="evidence" value="ECO:0007669"/>
    <property type="project" value="UniProtKB-UniRule"/>
</dbReference>
<dbReference type="GO" id="GO:0006515">
    <property type="term" value="P:protein quality control for misfolded or incompletely synthesized proteins"/>
    <property type="evidence" value="ECO:0007669"/>
    <property type="project" value="TreeGrafter"/>
</dbReference>
<dbReference type="CDD" id="cd07017">
    <property type="entry name" value="S14_ClpP_2"/>
    <property type="match status" value="1"/>
</dbReference>
<dbReference type="FunFam" id="3.90.226.10:FF:000001">
    <property type="entry name" value="ATP-dependent Clp protease proteolytic subunit"/>
    <property type="match status" value="1"/>
</dbReference>
<dbReference type="Gene3D" id="3.90.226.10">
    <property type="entry name" value="2-enoyl-CoA Hydratase, Chain A, domain 1"/>
    <property type="match status" value="1"/>
</dbReference>
<dbReference type="HAMAP" id="MF_00444">
    <property type="entry name" value="ClpP"/>
    <property type="match status" value="1"/>
</dbReference>
<dbReference type="InterPro" id="IPR001907">
    <property type="entry name" value="ClpP"/>
</dbReference>
<dbReference type="InterPro" id="IPR029045">
    <property type="entry name" value="ClpP/crotonase-like_dom_sf"/>
</dbReference>
<dbReference type="InterPro" id="IPR023562">
    <property type="entry name" value="ClpP/TepA"/>
</dbReference>
<dbReference type="InterPro" id="IPR033135">
    <property type="entry name" value="ClpP_His_AS"/>
</dbReference>
<dbReference type="NCBIfam" id="NF001368">
    <property type="entry name" value="PRK00277.1"/>
    <property type="match status" value="1"/>
</dbReference>
<dbReference type="NCBIfam" id="NF009205">
    <property type="entry name" value="PRK12553.1"/>
    <property type="match status" value="1"/>
</dbReference>
<dbReference type="PANTHER" id="PTHR10381">
    <property type="entry name" value="ATP-DEPENDENT CLP PROTEASE PROTEOLYTIC SUBUNIT"/>
    <property type="match status" value="1"/>
</dbReference>
<dbReference type="PANTHER" id="PTHR10381:SF70">
    <property type="entry name" value="ATP-DEPENDENT CLP PROTEASE PROTEOLYTIC SUBUNIT"/>
    <property type="match status" value="1"/>
</dbReference>
<dbReference type="Pfam" id="PF00574">
    <property type="entry name" value="CLP_protease"/>
    <property type="match status" value="1"/>
</dbReference>
<dbReference type="PRINTS" id="PR00127">
    <property type="entry name" value="CLPPROTEASEP"/>
</dbReference>
<dbReference type="SUPFAM" id="SSF52096">
    <property type="entry name" value="ClpP/crotonase"/>
    <property type="match status" value="1"/>
</dbReference>
<dbReference type="PROSITE" id="PS00382">
    <property type="entry name" value="CLP_PROTEASE_HIS"/>
    <property type="match status" value="1"/>
</dbReference>
<proteinExistence type="inferred from homology"/>
<evidence type="ECO:0000255" key="1">
    <source>
        <dbReference type="HAMAP-Rule" id="MF_00444"/>
    </source>
</evidence>
<accession>Q1MK43</accession>
<organism>
    <name type="scientific">Rhizobium johnstonii (strain DSM 114642 / LMG 32736 / 3841)</name>
    <name type="common">Rhizobium leguminosarum bv. viciae</name>
    <dbReference type="NCBI Taxonomy" id="216596"/>
    <lineage>
        <taxon>Bacteria</taxon>
        <taxon>Pseudomonadati</taxon>
        <taxon>Pseudomonadota</taxon>
        <taxon>Alphaproteobacteria</taxon>
        <taxon>Hyphomicrobiales</taxon>
        <taxon>Rhizobiaceae</taxon>
        <taxon>Rhizobium/Agrobacterium group</taxon>
        <taxon>Rhizobium</taxon>
        <taxon>Rhizobium johnstonii</taxon>
    </lineage>
</organism>
<comment type="function">
    <text evidence="1">Cleaves peptides in various proteins in a process that requires ATP hydrolysis. Has a chymotrypsin-like activity. Plays a major role in the degradation of misfolded proteins.</text>
</comment>
<comment type="catalytic activity">
    <reaction evidence="1">
        <text>Hydrolysis of proteins to small peptides in the presence of ATP and magnesium. alpha-casein is the usual test substrate. In the absence of ATP, only oligopeptides shorter than five residues are hydrolyzed (such as succinyl-Leu-Tyr-|-NHMec, and Leu-Tyr-Leu-|-Tyr-Trp, in which cleavage of the -Tyr-|-Leu- and -Tyr-|-Trp bonds also occurs).</text>
        <dbReference type="EC" id="3.4.21.92"/>
    </reaction>
</comment>
<comment type="subunit">
    <text evidence="1">Fourteen ClpP subunits assemble into 2 heptameric rings which stack back to back to give a disk-like structure with a central cavity, resembling the structure of eukaryotic proteasomes.</text>
</comment>
<comment type="subcellular location">
    <subcellularLocation>
        <location evidence="1">Cytoplasm</location>
    </subcellularLocation>
</comment>
<comment type="similarity">
    <text evidence="1">Belongs to the peptidase S14 family.</text>
</comment>